<feature type="chain" id="PRO_0000373180" description="Protein MGF 100-3L">
    <location>
        <begin position="1"/>
        <end position="146"/>
    </location>
</feature>
<proteinExistence type="inferred from homology"/>
<protein>
    <recommendedName>
        <fullName>Protein MGF 100-3L</fullName>
    </recommendedName>
</protein>
<gene>
    <name type="ordered locus">Ken-163</name>
</gene>
<evidence type="ECO:0000250" key="1"/>
<evidence type="ECO:0000305" key="2"/>
<sequence length="146" mass="17155">MGNHLDGSYLPNTVMSIEDKQNTYNEAKEDSKICNKIYIKQSGKIDKKELKRIKKLDFFYSQKNDDEIERMFMNKPNGTFLLTDDATDENLFLVQKDLENGSLNIAKLDFNGKALYINGKNYFSLENYLKTVEDFYKYPLIYDENK</sequence>
<organismHost>
    <name type="scientific">Ornithodoros</name>
    <name type="common">relapsing fever ticks</name>
    <dbReference type="NCBI Taxonomy" id="6937"/>
</organismHost>
<organismHost>
    <name type="scientific">Phacochoerus aethiopicus</name>
    <name type="common">Warthog</name>
    <dbReference type="NCBI Taxonomy" id="85517"/>
</organismHost>
<organismHost>
    <name type="scientific">Phacochoerus africanus</name>
    <name type="common">Warthog</name>
    <dbReference type="NCBI Taxonomy" id="41426"/>
</organismHost>
<organismHost>
    <name type="scientific">Potamochoerus larvatus</name>
    <name type="common">Bushpig</name>
    <dbReference type="NCBI Taxonomy" id="273792"/>
</organismHost>
<organismHost>
    <name type="scientific">Sus scrofa</name>
    <name type="common">Pig</name>
    <dbReference type="NCBI Taxonomy" id="9823"/>
</organismHost>
<organism>
    <name type="scientific">African swine fever virus (isolate Pig/Kenya/KEN-50/1950)</name>
    <name type="common">ASFV</name>
    <dbReference type="NCBI Taxonomy" id="561445"/>
    <lineage>
        <taxon>Viruses</taxon>
        <taxon>Varidnaviria</taxon>
        <taxon>Bamfordvirae</taxon>
        <taxon>Nucleocytoviricota</taxon>
        <taxon>Pokkesviricetes</taxon>
        <taxon>Asfuvirales</taxon>
        <taxon>Asfarviridae</taxon>
        <taxon>Asfivirus</taxon>
        <taxon>African swine fever virus</taxon>
    </lineage>
</organism>
<keyword id="KW-0244">Early protein</keyword>
<name>1003L_ASFK5</name>
<dbReference type="EMBL" id="AY261360">
    <property type="status" value="NOT_ANNOTATED_CDS"/>
    <property type="molecule type" value="Genomic_DNA"/>
</dbReference>
<dbReference type="SMR" id="P0C9F8"/>
<dbReference type="Proteomes" id="UP000000861">
    <property type="component" value="Segment"/>
</dbReference>
<accession>P0C9F8</accession>
<comment type="function">
    <text evidence="1">Plays a role in virus cell tropism, and may be required for efficient virus replication in macrophages.</text>
</comment>
<comment type="induction">
    <text evidence="2">Expressed in the early phase of the viral replicative cycle.</text>
</comment>
<comment type="similarity">
    <text evidence="2">Belongs to the asfivirus MGF 100 family.</text>
</comment>
<reference key="1">
    <citation type="submission" date="2003-03" db="EMBL/GenBank/DDBJ databases">
        <title>African swine fever virus genomes.</title>
        <authorList>
            <person name="Kutish G.F."/>
            <person name="Rock D.L."/>
        </authorList>
    </citation>
    <scope>NUCLEOTIDE SEQUENCE [LARGE SCALE GENOMIC DNA]</scope>
</reference>